<sequence length="756" mass="85157">MLTSNLGYPRIGENREWKKALESFWANDTTEEQLLATMKELRLNHLRVQQEQEVDLIPVGDFTLYDHVLDMAVMFGIIPKRFLQQGDTPTLSTYFAMARGSKNAQACEMTKWYNTNYHYIVPELHDAAPRLTKNAPLEAYLEAKNELGIDGKPVILGPYSFVKLAKGYEEDKLQETIQSLLPLYIQVIQELVDAGARSIQVDEPSLVTSISAREMALVTRIYEQINEAIADAPLFLQTYFDAVTFYEEVVSLPVKGIGLDFVHGGAKNLEALRTFGFPEDKVLAAGIIDGRNIWISNLRERHELVHQLEQHVAKDRLVLQPSCSLLHVPVTTKREEKLDPTLLGVLAFANEKLTELHTLKQLAAGNEAEVKEALEANDDALAALEKSGWRSGAATSHNLENKKRPQSFNERRPLQEEKWQLPLLPTTTIGSFPQTKDVRRTRSLWRKGELSTVEYERTMKSYIEKWINIQEELGLDVLVHGEFERNDMVEFFGEKLDGFAFTANGWVQSYGSRCVKPPIIYGNVSFTEPMTVAETVYAQSLTDKPVKGMLTGPVTILNWSFVRDDLPLTVIAHQIAEALTHEVTALEEAGIEMIQIDEPAIREGLPLKAEDQQEYLDWAVSAFRASCAHVKATTQIHTHMCYSEFHEMIEAIDDLDADVISIETSRSHGEMISAFEKTTYEKGIGLGVYDIHSPRVPSEEEMLNVIRRALTVLPASLFWVNPDCGLKTRAEKETVAALKNMVAAARAAREELKTKA</sequence>
<name>METE_HALH5</name>
<proteinExistence type="inferred from homology"/>
<gene>
    <name evidence="1" type="primary">metE</name>
    <name type="ordered locus">BH0438</name>
</gene>
<reference key="1">
    <citation type="journal article" date="2000" name="Nucleic Acids Res.">
        <title>Complete genome sequence of the alkaliphilic bacterium Bacillus halodurans and genomic sequence comparison with Bacillus subtilis.</title>
        <authorList>
            <person name="Takami H."/>
            <person name="Nakasone K."/>
            <person name="Takaki Y."/>
            <person name="Maeno G."/>
            <person name="Sasaki R."/>
            <person name="Masui N."/>
            <person name="Fuji F."/>
            <person name="Hirama C."/>
            <person name="Nakamura Y."/>
            <person name="Ogasawara N."/>
            <person name="Kuhara S."/>
            <person name="Horikoshi K."/>
        </authorList>
    </citation>
    <scope>NUCLEOTIDE SEQUENCE [LARGE SCALE GENOMIC DNA]</scope>
    <source>
        <strain>ATCC BAA-125 / DSM 18197 / FERM 7344 / JCM 9153 / C-125</strain>
    </source>
</reference>
<comment type="function">
    <text evidence="1">Catalyzes the transfer of a methyl group from 5-methyltetrahydrofolate to homocysteine resulting in methionine formation.</text>
</comment>
<comment type="catalytic activity">
    <reaction evidence="1">
        <text>5-methyltetrahydropteroyltri-L-glutamate + L-homocysteine = tetrahydropteroyltri-L-glutamate + L-methionine</text>
        <dbReference type="Rhea" id="RHEA:21196"/>
        <dbReference type="ChEBI" id="CHEBI:57844"/>
        <dbReference type="ChEBI" id="CHEBI:58140"/>
        <dbReference type="ChEBI" id="CHEBI:58199"/>
        <dbReference type="ChEBI" id="CHEBI:58207"/>
        <dbReference type="EC" id="2.1.1.14"/>
    </reaction>
</comment>
<comment type="cofactor">
    <cofactor evidence="1">
        <name>Zn(2+)</name>
        <dbReference type="ChEBI" id="CHEBI:29105"/>
    </cofactor>
    <text evidence="1">Binds 1 zinc ion per subunit.</text>
</comment>
<comment type="pathway">
    <text evidence="1">Amino-acid biosynthesis; L-methionine biosynthesis via de novo pathway; L-methionine from L-homocysteine (MetE route): step 1/1.</text>
</comment>
<comment type="similarity">
    <text evidence="1 3">Belongs to the vitamin-B12 independent methionine synthase family.</text>
</comment>
<evidence type="ECO:0000255" key="1">
    <source>
        <dbReference type="HAMAP-Rule" id="MF_00172"/>
    </source>
</evidence>
<evidence type="ECO:0000256" key="2">
    <source>
        <dbReference type="SAM" id="MobiDB-lite"/>
    </source>
</evidence>
<evidence type="ECO:0000305" key="3"/>
<accession>Q9KFP1</accession>
<feature type="chain" id="PRO_0000098612" description="5-methyltetrahydropteroyltriglutamate--homocysteine methyltransferase">
    <location>
        <begin position="1"/>
        <end position="756"/>
    </location>
</feature>
<feature type="region of interest" description="Disordered" evidence="2">
    <location>
        <begin position="392"/>
        <end position="411"/>
    </location>
</feature>
<feature type="compositionally biased region" description="Basic and acidic residues" evidence="2">
    <location>
        <begin position="399"/>
        <end position="411"/>
    </location>
</feature>
<feature type="active site" description="Proton donor" evidence="1">
    <location>
        <position position="692"/>
    </location>
</feature>
<feature type="binding site" evidence="1">
    <location>
        <begin position="15"/>
        <end position="18"/>
    </location>
    <ligand>
        <name>5-methyltetrahydropteroyltri-L-glutamate</name>
        <dbReference type="ChEBI" id="CHEBI:58207"/>
    </ligand>
</feature>
<feature type="binding site" evidence="1">
    <location>
        <position position="111"/>
    </location>
    <ligand>
        <name>5-methyltetrahydropteroyltri-L-glutamate</name>
        <dbReference type="ChEBI" id="CHEBI:58207"/>
    </ligand>
</feature>
<feature type="binding site" evidence="1">
    <location>
        <begin position="429"/>
        <end position="431"/>
    </location>
    <ligand>
        <name>L-homocysteine</name>
        <dbReference type="ChEBI" id="CHEBI:58199"/>
    </ligand>
</feature>
<feature type="binding site" evidence="1">
    <location>
        <begin position="429"/>
        <end position="431"/>
    </location>
    <ligand>
        <name>L-methionine</name>
        <dbReference type="ChEBI" id="CHEBI:57844"/>
    </ligand>
</feature>
<feature type="binding site" evidence="1">
    <location>
        <position position="482"/>
    </location>
    <ligand>
        <name>L-homocysteine</name>
        <dbReference type="ChEBI" id="CHEBI:58199"/>
    </ligand>
</feature>
<feature type="binding site" evidence="1">
    <location>
        <position position="482"/>
    </location>
    <ligand>
        <name>L-methionine</name>
        <dbReference type="ChEBI" id="CHEBI:57844"/>
    </ligand>
</feature>
<feature type="binding site" evidence="1">
    <location>
        <begin position="513"/>
        <end position="514"/>
    </location>
    <ligand>
        <name>5-methyltetrahydropteroyltri-L-glutamate</name>
        <dbReference type="ChEBI" id="CHEBI:58207"/>
    </ligand>
</feature>
<feature type="binding site" evidence="1">
    <location>
        <position position="559"/>
    </location>
    <ligand>
        <name>5-methyltetrahydropteroyltri-L-glutamate</name>
        <dbReference type="ChEBI" id="CHEBI:58207"/>
    </ligand>
</feature>
<feature type="binding site" evidence="1">
    <location>
        <position position="597"/>
    </location>
    <ligand>
        <name>L-homocysteine</name>
        <dbReference type="ChEBI" id="CHEBI:58199"/>
    </ligand>
</feature>
<feature type="binding site" evidence="1">
    <location>
        <position position="597"/>
    </location>
    <ligand>
        <name>L-methionine</name>
        <dbReference type="ChEBI" id="CHEBI:57844"/>
    </ligand>
</feature>
<feature type="binding site" evidence="1">
    <location>
        <position position="603"/>
    </location>
    <ligand>
        <name>5-methyltetrahydropteroyltri-L-glutamate</name>
        <dbReference type="ChEBI" id="CHEBI:58207"/>
    </ligand>
</feature>
<feature type="binding site" evidence="1">
    <location>
        <position position="639"/>
    </location>
    <ligand>
        <name>Zn(2+)</name>
        <dbReference type="ChEBI" id="CHEBI:29105"/>
        <note>catalytic</note>
    </ligand>
</feature>
<feature type="binding site" evidence="1">
    <location>
        <position position="641"/>
    </location>
    <ligand>
        <name>Zn(2+)</name>
        <dbReference type="ChEBI" id="CHEBI:29105"/>
        <note>catalytic</note>
    </ligand>
</feature>
<feature type="binding site" evidence="1">
    <location>
        <position position="663"/>
    </location>
    <ligand>
        <name>Zn(2+)</name>
        <dbReference type="ChEBI" id="CHEBI:29105"/>
        <note>catalytic</note>
    </ligand>
</feature>
<feature type="binding site" evidence="1">
    <location>
        <position position="724"/>
    </location>
    <ligand>
        <name>Zn(2+)</name>
        <dbReference type="ChEBI" id="CHEBI:29105"/>
        <note>catalytic</note>
    </ligand>
</feature>
<keyword id="KW-0028">Amino-acid biosynthesis</keyword>
<keyword id="KW-0479">Metal-binding</keyword>
<keyword id="KW-0486">Methionine biosynthesis</keyword>
<keyword id="KW-0489">Methyltransferase</keyword>
<keyword id="KW-1185">Reference proteome</keyword>
<keyword id="KW-0677">Repeat</keyword>
<keyword id="KW-0808">Transferase</keyword>
<keyword id="KW-0862">Zinc</keyword>
<protein>
    <recommendedName>
        <fullName evidence="1">5-methyltetrahydropteroyltriglutamate--homocysteine methyltransferase</fullName>
        <ecNumber evidence="1">2.1.1.14</ecNumber>
    </recommendedName>
    <alternativeName>
        <fullName evidence="1">Cobalamin-independent methionine synthase</fullName>
    </alternativeName>
    <alternativeName>
        <fullName evidence="1">Methionine synthase, vitamin-B12 independent isozyme</fullName>
    </alternativeName>
</protein>
<dbReference type="EC" id="2.1.1.14" evidence="1"/>
<dbReference type="EMBL" id="BA000004">
    <property type="protein sequence ID" value="BAB04157.1"/>
    <property type="molecule type" value="Genomic_DNA"/>
</dbReference>
<dbReference type="PIR" id="F83704">
    <property type="entry name" value="F83704"/>
</dbReference>
<dbReference type="RefSeq" id="WP_010896616.1">
    <property type="nucleotide sequence ID" value="NC_002570.2"/>
</dbReference>
<dbReference type="SMR" id="Q9KFP1"/>
<dbReference type="STRING" id="272558.gene:10726291"/>
<dbReference type="DNASU" id="893412"/>
<dbReference type="KEGG" id="bha:BH0438"/>
<dbReference type="eggNOG" id="COG0620">
    <property type="taxonomic scope" value="Bacteria"/>
</dbReference>
<dbReference type="HOGENOM" id="CLU_013175_0_0_9"/>
<dbReference type="OrthoDB" id="244285at2"/>
<dbReference type="UniPathway" id="UPA00051">
    <property type="reaction ID" value="UER00082"/>
</dbReference>
<dbReference type="Proteomes" id="UP000001258">
    <property type="component" value="Chromosome"/>
</dbReference>
<dbReference type="GO" id="GO:0003871">
    <property type="term" value="F:5-methyltetrahydropteroyltriglutamate-homocysteine S-methyltransferase activity"/>
    <property type="evidence" value="ECO:0007669"/>
    <property type="project" value="UniProtKB-UniRule"/>
</dbReference>
<dbReference type="GO" id="GO:0008270">
    <property type="term" value="F:zinc ion binding"/>
    <property type="evidence" value="ECO:0007669"/>
    <property type="project" value="InterPro"/>
</dbReference>
<dbReference type="GO" id="GO:0009086">
    <property type="term" value="P:methionine biosynthetic process"/>
    <property type="evidence" value="ECO:0007669"/>
    <property type="project" value="UniProtKB-UniRule"/>
</dbReference>
<dbReference type="GO" id="GO:0032259">
    <property type="term" value="P:methylation"/>
    <property type="evidence" value="ECO:0007669"/>
    <property type="project" value="UniProtKB-KW"/>
</dbReference>
<dbReference type="CDD" id="cd03311">
    <property type="entry name" value="CIMS_C_terminal_like"/>
    <property type="match status" value="1"/>
</dbReference>
<dbReference type="CDD" id="cd03312">
    <property type="entry name" value="CIMS_N_terminal_like"/>
    <property type="match status" value="1"/>
</dbReference>
<dbReference type="Gene3D" id="3.20.20.210">
    <property type="match status" value="2"/>
</dbReference>
<dbReference type="HAMAP" id="MF_00172">
    <property type="entry name" value="Meth_synth"/>
    <property type="match status" value="1"/>
</dbReference>
<dbReference type="InterPro" id="IPR013215">
    <property type="entry name" value="Cbl-indep_Met_Synth_N"/>
</dbReference>
<dbReference type="InterPro" id="IPR006276">
    <property type="entry name" value="Cobalamin-indep_Met_synthase"/>
</dbReference>
<dbReference type="InterPro" id="IPR002629">
    <property type="entry name" value="Met_Synth_C/arc"/>
</dbReference>
<dbReference type="InterPro" id="IPR038071">
    <property type="entry name" value="UROD/MetE-like_sf"/>
</dbReference>
<dbReference type="NCBIfam" id="TIGR01371">
    <property type="entry name" value="met_syn_B12ind"/>
    <property type="match status" value="1"/>
</dbReference>
<dbReference type="NCBIfam" id="NF003556">
    <property type="entry name" value="PRK05222.1"/>
    <property type="match status" value="1"/>
</dbReference>
<dbReference type="PANTHER" id="PTHR30519">
    <property type="entry name" value="5-METHYLTETRAHYDROPTEROYLTRIGLUTAMATE--HOMOCYSTEINE METHYLTRANSFERASE"/>
    <property type="match status" value="1"/>
</dbReference>
<dbReference type="Pfam" id="PF08267">
    <property type="entry name" value="Meth_synt_1"/>
    <property type="match status" value="1"/>
</dbReference>
<dbReference type="Pfam" id="PF01717">
    <property type="entry name" value="Meth_synt_2"/>
    <property type="match status" value="1"/>
</dbReference>
<dbReference type="PIRSF" id="PIRSF000382">
    <property type="entry name" value="MeTrfase_B12_ind"/>
    <property type="match status" value="1"/>
</dbReference>
<dbReference type="SUPFAM" id="SSF51726">
    <property type="entry name" value="UROD/MetE-like"/>
    <property type="match status" value="2"/>
</dbReference>
<organism>
    <name type="scientific">Halalkalibacterium halodurans (strain ATCC BAA-125 / DSM 18197 / FERM 7344 / JCM 9153 / C-125)</name>
    <name type="common">Bacillus halodurans</name>
    <dbReference type="NCBI Taxonomy" id="272558"/>
    <lineage>
        <taxon>Bacteria</taxon>
        <taxon>Bacillati</taxon>
        <taxon>Bacillota</taxon>
        <taxon>Bacilli</taxon>
        <taxon>Bacillales</taxon>
        <taxon>Bacillaceae</taxon>
        <taxon>Halalkalibacterium (ex Joshi et al. 2022)</taxon>
    </lineage>
</organism>